<comment type="function">
    <text evidence="4">Salivary chemokine-binding protein which has chemokine-neutralizing activity and binds to host chemokines CCL1, CCL2, CCL3, CCL3L1, CCL7, CCL8, CCL11, CCL12, CCL13, CCL14, CCL15, CCL16, CCL18 and CCL23 (PubMed:29487134). Binds to CCL8 with 1:1 stoichiometry and disrupts CCL8 homodimer formation (PubMed:29487134).</text>
</comment>
<comment type="subcellular location">
    <subcellularLocation>
        <location evidence="6">Secreted</location>
    </subcellularLocation>
</comment>
<comment type="domain">
    <text evidence="4">The N-terminal region is required for binding to CCL8.</text>
</comment>
<name>EV672_RHIPC</name>
<keyword id="KW-1015">Disulfide bond</keyword>
<keyword id="KW-0325">Glycoprotein</keyword>
<keyword id="KW-0964">Secreted</keyword>
<keyword id="KW-0732">Signal</keyword>
<reference evidence="7" key="1">
    <citation type="journal article" date="2015" name="J. Proteomics">
        <title>Sexual differences in the sialomes of the zebra tick, Rhipicephalus pulchellus.</title>
        <authorList>
            <person name="Tan A.W."/>
            <person name="Francischetti I.M."/>
            <person name="Slovak M."/>
            <person name="Kini R.M."/>
            <person name="Ribeiro J.M."/>
        </authorList>
    </citation>
    <scope>NUCLEOTIDE SEQUENCE [LARGE SCALE MRNA]</scope>
    <source>
        <tissue evidence="7">Salivary gland</tissue>
    </source>
</reference>
<reference evidence="6" key="2">
    <citation type="journal article" date="2018" name="J. Biol. Chem.">
        <title>The N-terminal domain of a tick evasin is critical for chemokine binding and neutralization and confers specific binding activity to other evasins.</title>
        <authorList>
            <person name="Eaton J.R.O."/>
            <person name="Alenazi Y."/>
            <person name="Singh K."/>
            <person name="Davies G."/>
            <person name="Geis-Asteggiante L."/>
            <person name="Kessler B."/>
            <person name="Robinson C.V."/>
            <person name="Kawamura A."/>
            <person name="Bhattacharya S."/>
        </authorList>
    </citation>
    <scope>FUNCTION</scope>
    <scope>DOMAIN</scope>
    <scope>GLYCOSYLATION AT ASN-35; ASN-55; ASN-65; ASN-104; ASN-112 AND ASN-118</scope>
</reference>
<evidence type="ECO:0000250" key="1">
    <source>
        <dbReference type="UniProtKB" id="P0C8E7"/>
    </source>
</evidence>
<evidence type="ECO:0000255" key="2"/>
<evidence type="ECO:0000255" key="3">
    <source>
        <dbReference type="PROSITE-ProRule" id="PRU00498"/>
    </source>
</evidence>
<evidence type="ECO:0000269" key="4">
    <source>
    </source>
</evidence>
<evidence type="ECO:0000303" key="5">
    <source>
    </source>
</evidence>
<evidence type="ECO:0000305" key="6"/>
<evidence type="ECO:0000312" key="7">
    <source>
        <dbReference type="EMBL" id="JAA60789.1"/>
    </source>
</evidence>
<sequence length="125" mass="13925">MAHKIAIGLVCVLYALHIMSAVCEVSEQEGVGEDNATEDEDYEDFFKPVTCYFANSTVGPLRPPNCTVVCTNNTAWWNDTKSDGGHCYSEYRPEKRTHSREIYNCTIGVCGNGTCIANHTYADCW</sequence>
<organism>
    <name type="scientific">Rhipicephalus pulchellus</name>
    <name type="common">Yellow backed tick</name>
    <name type="synonym">Dermacentor pulchellus</name>
    <dbReference type="NCBI Taxonomy" id="72859"/>
    <lineage>
        <taxon>Eukaryota</taxon>
        <taxon>Metazoa</taxon>
        <taxon>Ecdysozoa</taxon>
        <taxon>Arthropoda</taxon>
        <taxon>Chelicerata</taxon>
        <taxon>Arachnida</taxon>
        <taxon>Acari</taxon>
        <taxon>Parasitiformes</taxon>
        <taxon>Ixodida</taxon>
        <taxon>Ixodoidea</taxon>
        <taxon>Ixodidae</taxon>
        <taxon>Rhipicephalinae</taxon>
        <taxon>Rhipicephalus</taxon>
        <taxon>Rhipicephalus</taxon>
    </lineage>
</organism>
<proteinExistence type="evidence at protein level"/>
<dbReference type="EMBL" id="GACK01004245">
    <property type="protein sequence ID" value="JAA60789.1"/>
    <property type="molecule type" value="mRNA"/>
</dbReference>
<dbReference type="SMR" id="L7MC74"/>
<dbReference type="iPTMnet" id="L7MC74"/>
<dbReference type="GO" id="GO:0005576">
    <property type="term" value="C:extracellular region"/>
    <property type="evidence" value="ECO:0007669"/>
    <property type="project" value="UniProtKB-SubCell"/>
</dbReference>
<dbReference type="GO" id="GO:0019957">
    <property type="term" value="F:C-C chemokine binding"/>
    <property type="evidence" value="ECO:0007669"/>
    <property type="project" value="InterPro"/>
</dbReference>
<dbReference type="GO" id="GO:0019956">
    <property type="term" value="F:chemokine binding"/>
    <property type="evidence" value="ECO:0000314"/>
    <property type="project" value="UniProtKB"/>
</dbReference>
<dbReference type="GO" id="GO:1900137">
    <property type="term" value="P:negative regulation of chemokine activity"/>
    <property type="evidence" value="ECO:0000314"/>
    <property type="project" value="UniProtKB"/>
</dbReference>
<dbReference type="Gene3D" id="2.30.130.100">
    <property type="match status" value="1"/>
</dbReference>
<dbReference type="InterPro" id="IPR045797">
    <property type="entry name" value="EVA_Class_A"/>
</dbReference>
<dbReference type="Pfam" id="PF19429">
    <property type="entry name" value="EVA_Class_A"/>
    <property type="match status" value="1"/>
</dbReference>
<protein>
    <recommendedName>
        <fullName evidence="5">Evasin P672</fullName>
    </recommendedName>
</protein>
<feature type="signal peptide" evidence="2">
    <location>
        <begin position="1"/>
        <end position="21"/>
    </location>
</feature>
<feature type="chain" id="PRO_5003981242" description="Evasin P672" evidence="2">
    <location>
        <begin position="22"/>
        <end position="125"/>
    </location>
</feature>
<feature type="glycosylation site" description="N-linked (GlcNAc...) asparagine" evidence="4">
    <location>
        <position position="35"/>
    </location>
</feature>
<feature type="glycosylation site" description="N-linked (GlcNAc...) asparagine" evidence="4">
    <location>
        <position position="55"/>
    </location>
</feature>
<feature type="glycosylation site" description="N-linked (GlcNAc...) asparagine" evidence="4">
    <location>
        <position position="65"/>
    </location>
</feature>
<feature type="glycosylation site" description="N-linked (GlcNAc...) asparagine" evidence="3">
    <location>
        <position position="72"/>
    </location>
</feature>
<feature type="glycosylation site" description="N-linked (GlcNAc...) asparagine" evidence="3">
    <location>
        <position position="78"/>
    </location>
</feature>
<feature type="glycosylation site" description="N-linked (GlcNAc...) asparagine" evidence="4">
    <location>
        <position position="104"/>
    </location>
</feature>
<feature type="glycosylation site" description="N-linked (GlcNAc...) asparagine" evidence="4">
    <location>
        <position position="112"/>
    </location>
</feature>
<feature type="glycosylation site" description="N-linked (GlcNAc...) asparagine" evidence="4">
    <location>
        <position position="118"/>
    </location>
</feature>
<feature type="disulfide bond" evidence="1">
    <location>
        <begin position="70"/>
        <end position="110"/>
    </location>
</feature>
<feature type="disulfide bond" evidence="1">
    <location>
        <begin position="87"/>
        <end position="115"/>
    </location>
</feature>
<feature type="disulfide bond" evidence="1">
    <location>
        <begin position="105"/>
        <end position="124"/>
    </location>
</feature>
<accession>L7MC74</accession>